<gene>
    <name evidence="1" type="primary">mdtI</name>
    <name type="ordered locus">ECS88_1644</name>
</gene>
<reference key="1">
    <citation type="journal article" date="2009" name="PLoS Genet.">
        <title>Organised genome dynamics in the Escherichia coli species results in highly diverse adaptive paths.</title>
        <authorList>
            <person name="Touchon M."/>
            <person name="Hoede C."/>
            <person name="Tenaillon O."/>
            <person name="Barbe V."/>
            <person name="Baeriswyl S."/>
            <person name="Bidet P."/>
            <person name="Bingen E."/>
            <person name="Bonacorsi S."/>
            <person name="Bouchier C."/>
            <person name="Bouvet O."/>
            <person name="Calteau A."/>
            <person name="Chiapello H."/>
            <person name="Clermont O."/>
            <person name="Cruveiller S."/>
            <person name="Danchin A."/>
            <person name="Diard M."/>
            <person name="Dossat C."/>
            <person name="Karoui M.E."/>
            <person name="Frapy E."/>
            <person name="Garry L."/>
            <person name="Ghigo J.M."/>
            <person name="Gilles A.M."/>
            <person name="Johnson J."/>
            <person name="Le Bouguenec C."/>
            <person name="Lescat M."/>
            <person name="Mangenot S."/>
            <person name="Martinez-Jehanne V."/>
            <person name="Matic I."/>
            <person name="Nassif X."/>
            <person name="Oztas S."/>
            <person name="Petit M.A."/>
            <person name="Pichon C."/>
            <person name="Rouy Z."/>
            <person name="Ruf C.S."/>
            <person name="Schneider D."/>
            <person name="Tourret J."/>
            <person name="Vacherie B."/>
            <person name="Vallenet D."/>
            <person name="Medigue C."/>
            <person name="Rocha E.P.C."/>
            <person name="Denamur E."/>
        </authorList>
    </citation>
    <scope>NUCLEOTIDE SEQUENCE [LARGE SCALE GENOMIC DNA]</scope>
    <source>
        <strain>S88 / ExPEC</strain>
    </source>
</reference>
<accession>B7M9V2</accession>
<name>MDTI_ECO45</name>
<sequence length="109" mass="11720">MAQFEWVHAAWLALAIVLEIVANVFLKFSDGFRRKIFGLLSLAAVLAAFSALSQAVKGIDLSVAYALWGGFGIAATLAAGWILFGQRLNRKGWIGLVLLLAGMIMVKLA</sequence>
<protein>
    <recommendedName>
        <fullName evidence="1">Spermidine export protein MdtI</fullName>
    </recommendedName>
</protein>
<keyword id="KW-0997">Cell inner membrane</keyword>
<keyword id="KW-1003">Cell membrane</keyword>
<keyword id="KW-0472">Membrane</keyword>
<keyword id="KW-1185">Reference proteome</keyword>
<keyword id="KW-0812">Transmembrane</keyword>
<keyword id="KW-1133">Transmembrane helix</keyword>
<keyword id="KW-0813">Transport</keyword>
<dbReference type="EMBL" id="CU928161">
    <property type="protein sequence ID" value="CAR02959.1"/>
    <property type="molecule type" value="Genomic_DNA"/>
</dbReference>
<dbReference type="RefSeq" id="WP_000046661.1">
    <property type="nucleotide sequence ID" value="NC_011742.1"/>
</dbReference>
<dbReference type="SMR" id="B7M9V2"/>
<dbReference type="GeneID" id="93775747"/>
<dbReference type="KEGG" id="ecz:ECS88_1644"/>
<dbReference type="HOGENOM" id="CLU_133067_0_4_6"/>
<dbReference type="Proteomes" id="UP000000747">
    <property type="component" value="Chromosome"/>
</dbReference>
<dbReference type="GO" id="GO:0005886">
    <property type="term" value="C:plasma membrane"/>
    <property type="evidence" value="ECO:0007669"/>
    <property type="project" value="UniProtKB-SubCell"/>
</dbReference>
<dbReference type="GO" id="GO:0015199">
    <property type="term" value="F:amino-acid betaine transmembrane transporter activity"/>
    <property type="evidence" value="ECO:0007669"/>
    <property type="project" value="TreeGrafter"/>
</dbReference>
<dbReference type="GO" id="GO:0015297">
    <property type="term" value="F:antiporter activity"/>
    <property type="evidence" value="ECO:0007669"/>
    <property type="project" value="TreeGrafter"/>
</dbReference>
<dbReference type="GO" id="GO:0015220">
    <property type="term" value="F:choline transmembrane transporter activity"/>
    <property type="evidence" value="ECO:0007669"/>
    <property type="project" value="TreeGrafter"/>
</dbReference>
<dbReference type="GO" id="GO:0015606">
    <property type="term" value="F:spermidine transmembrane transporter activity"/>
    <property type="evidence" value="ECO:0007669"/>
    <property type="project" value="UniProtKB-UniRule"/>
</dbReference>
<dbReference type="GO" id="GO:0031460">
    <property type="term" value="P:glycine betaine transport"/>
    <property type="evidence" value="ECO:0007669"/>
    <property type="project" value="TreeGrafter"/>
</dbReference>
<dbReference type="FunFam" id="1.10.3730.20:FF:000001">
    <property type="entry name" value="Quaternary ammonium compound resistance transporter SugE"/>
    <property type="match status" value="1"/>
</dbReference>
<dbReference type="Gene3D" id="1.10.3730.20">
    <property type="match status" value="1"/>
</dbReference>
<dbReference type="HAMAP" id="MF_01597">
    <property type="entry name" value="MdtI"/>
    <property type="match status" value="1"/>
</dbReference>
<dbReference type="InterPro" id="IPR000390">
    <property type="entry name" value="Small_drug/metabolite_transptr"/>
</dbReference>
<dbReference type="InterPro" id="IPR045324">
    <property type="entry name" value="Small_multidrug_res"/>
</dbReference>
<dbReference type="InterPro" id="IPR023737">
    <property type="entry name" value="Spermidine_export_MdtI"/>
</dbReference>
<dbReference type="NCBIfam" id="NF007934">
    <property type="entry name" value="PRK10650.1"/>
    <property type="match status" value="1"/>
</dbReference>
<dbReference type="PANTHER" id="PTHR30561">
    <property type="entry name" value="SMR FAMILY PROTON-DEPENDENT DRUG EFFLUX TRANSPORTER SUGE"/>
    <property type="match status" value="1"/>
</dbReference>
<dbReference type="PANTHER" id="PTHR30561:SF6">
    <property type="entry name" value="SPERMIDINE EXPORT PROTEIN MDTI"/>
    <property type="match status" value="1"/>
</dbReference>
<dbReference type="Pfam" id="PF00893">
    <property type="entry name" value="Multi_Drug_Res"/>
    <property type="match status" value="1"/>
</dbReference>
<dbReference type="SUPFAM" id="SSF103481">
    <property type="entry name" value="Multidrug resistance efflux transporter EmrE"/>
    <property type="match status" value="1"/>
</dbReference>
<comment type="function">
    <text evidence="1">Catalyzes the excretion of spermidine.</text>
</comment>
<comment type="subunit">
    <text evidence="1">Forms a complex with MdtJ.</text>
</comment>
<comment type="subcellular location">
    <subcellularLocation>
        <location evidence="1">Cell inner membrane</location>
        <topology evidence="1">Multi-pass membrane protein</topology>
    </subcellularLocation>
</comment>
<comment type="similarity">
    <text evidence="1">Belongs to the drug/metabolite transporter (DMT) superfamily. Small multidrug resistance (SMR) (TC 2.A.7.1) family. MdtI subfamily.</text>
</comment>
<evidence type="ECO:0000255" key="1">
    <source>
        <dbReference type="HAMAP-Rule" id="MF_01597"/>
    </source>
</evidence>
<proteinExistence type="inferred from homology"/>
<organism>
    <name type="scientific">Escherichia coli O45:K1 (strain S88 / ExPEC)</name>
    <dbReference type="NCBI Taxonomy" id="585035"/>
    <lineage>
        <taxon>Bacteria</taxon>
        <taxon>Pseudomonadati</taxon>
        <taxon>Pseudomonadota</taxon>
        <taxon>Gammaproteobacteria</taxon>
        <taxon>Enterobacterales</taxon>
        <taxon>Enterobacteriaceae</taxon>
        <taxon>Escherichia</taxon>
    </lineage>
</organism>
<feature type="chain" id="PRO_1000197315" description="Spermidine export protein MdtI">
    <location>
        <begin position="1"/>
        <end position="109"/>
    </location>
</feature>
<feature type="transmembrane region" description="Helical" evidence="1">
    <location>
        <begin position="6"/>
        <end position="26"/>
    </location>
</feature>
<feature type="transmembrane region" description="Helical" evidence="1">
    <location>
        <begin position="36"/>
        <end position="56"/>
    </location>
</feature>
<feature type="transmembrane region" description="Helical" evidence="1">
    <location>
        <begin position="64"/>
        <end position="84"/>
    </location>
</feature>
<feature type="transmembrane region" description="Helical" evidence="1">
    <location>
        <begin position="88"/>
        <end position="108"/>
    </location>
</feature>